<sequence>MKKYLNLTALLLVGISNVTWANAVNELQNRLNKIDVLSADYTQQVTDAQGKKIQQGSGKIQLKRPNLFRMDNETPQESQIIADGKTLWFYDPFVEQVTANWVEDTLSDTPFVLLTSNNPSHWQQYIVEQKSDTFIIKPKSKKSTIKQFNIRIEKDGVLKNFSTIEKDGQSNLYILRKITNPALNDAIFTFTLPKGVEFDDQRKK</sequence>
<dbReference type="EMBL" id="CP000947">
    <property type="protein sequence ID" value="ACA31013.1"/>
    <property type="molecule type" value="Genomic_DNA"/>
</dbReference>
<dbReference type="RefSeq" id="WP_012340442.1">
    <property type="nucleotide sequence ID" value="NC_010519.1"/>
</dbReference>
<dbReference type="SMR" id="B0UU06"/>
<dbReference type="STRING" id="228400.HSM_1283"/>
<dbReference type="GeneID" id="31487585"/>
<dbReference type="KEGG" id="hsm:HSM_1283"/>
<dbReference type="HOGENOM" id="CLU_087560_1_1_6"/>
<dbReference type="GO" id="GO:0030288">
    <property type="term" value="C:outer membrane-bounded periplasmic space"/>
    <property type="evidence" value="ECO:0007669"/>
    <property type="project" value="TreeGrafter"/>
</dbReference>
<dbReference type="GO" id="GO:0044874">
    <property type="term" value="P:lipoprotein localization to outer membrane"/>
    <property type="evidence" value="ECO:0007669"/>
    <property type="project" value="UniProtKB-UniRule"/>
</dbReference>
<dbReference type="GO" id="GO:0042953">
    <property type="term" value="P:lipoprotein transport"/>
    <property type="evidence" value="ECO:0007669"/>
    <property type="project" value="InterPro"/>
</dbReference>
<dbReference type="CDD" id="cd16325">
    <property type="entry name" value="LolA"/>
    <property type="match status" value="1"/>
</dbReference>
<dbReference type="Gene3D" id="2.50.20.10">
    <property type="entry name" value="Lipoprotein localisation LolA/LolB/LppX"/>
    <property type="match status" value="1"/>
</dbReference>
<dbReference type="HAMAP" id="MF_00240">
    <property type="entry name" value="LolA"/>
    <property type="match status" value="1"/>
</dbReference>
<dbReference type="InterPro" id="IPR029046">
    <property type="entry name" value="LolA/LolB/LppX"/>
</dbReference>
<dbReference type="InterPro" id="IPR004564">
    <property type="entry name" value="OM_lipoprot_carrier_LolA-like"/>
</dbReference>
<dbReference type="InterPro" id="IPR018323">
    <property type="entry name" value="OM_lipoprot_carrier_LolA_Pbac"/>
</dbReference>
<dbReference type="NCBIfam" id="TIGR00547">
    <property type="entry name" value="lolA"/>
    <property type="match status" value="1"/>
</dbReference>
<dbReference type="PANTHER" id="PTHR35869">
    <property type="entry name" value="OUTER-MEMBRANE LIPOPROTEIN CARRIER PROTEIN"/>
    <property type="match status" value="1"/>
</dbReference>
<dbReference type="PANTHER" id="PTHR35869:SF1">
    <property type="entry name" value="OUTER-MEMBRANE LIPOPROTEIN CARRIER PROTEIN"/>
    <property type="match status" value="1"/>
</dbReference>
<dbReference type="Pfam" id="PF03548">
    <property type="entry name" value="LolA"/>
    <property type="match status" value="1"/>
</dbReference>
<dbReference type="SUPFAM" id="SSF89392">
    <property type="entry name" value="Prokaryotic lipoproteins and lipoprotein localization factors"/>
    <property type="match status" value="1"/>
</dbReference>
<reference key="1">
    <citation type="submission" date="2008-02" db="EMBL/GenBank/DDBJ databases">
        <title>Complete sequence of Haemophilus somnus 2336.</title>
        <authorList>
            <consortium name="US DOE Joint Genome Institute"/>
            <person name="Siddaramappa S."/>
            <person name="Duncan A.J."/>
            <person name="Challacombe J.F."/>
            <person name="Rainey D."/>
            <person name="Gillaspy A.F."/>
            <person name="Carson M."/>
            <person name="Gipson J."/>
            <person name="Gipson M."/>
            <person name="Bruce D."/>
            <person name="Detter J.C."/>
            <person name="Han C.S."/>
            <person name="Land M."/>
            <person name="Tapia R."/>
            <person name="Thompson L.S."/>
            <person name="Orvis J."/>
            <person name="Zaitshik J."/>
            <person name="Barnes G."/>
            <person name="Brettin T.S."/>
            <person name="Dyer D.W."/>
            <person name="Inzana T.J."/>
        </authorList>
    </citation>
    <scope>NUCLEOTIDE SEQUENCE [LARGE SCALE GENOMIC DNA]</scope>
    <source>
        <strain>2336</strain>
    </source>
</reference>
<keyword id="KW-0143">Chaperone</keyword>
<keyword id="KW-0574">Periplasm</keyword>
<keyword id="KW-0653">Protein transport</keyword>
<keyword id="KW-0732">Signal</keyword>
<keyword id="KW-0813">Transport</keyword>
<proteinExistence type="inferred from homology"/>
<protein>
    <recommendedName>
        <fullName evidence="1">Outer-membrane lipoprotein carrier protein</fullName>
    </recommendedName>
</protein>
<comment type="function">
    <text evidence="1">Participates in the translocation of lipoproteins from the inner membrane to the outer membrane. Only forms a complex with a lipoprotein if the residue after the N-terminal Cys is not an aspartate (The Asp acts as a targeting signal to indicate that the lipoprotein should stay in the inner membrane).</text>
</comment>
<comment type="subunit">
    <text evidence="1">Monomer.</text>
</comment>
<comment type="subcellular location">
    <subcellularLocation>
        <location evidence="1">Periplasm</location>
    </subcellularLocation>
</comment>
<comment type="similarity">
    <text evidence="1">Belongs to the LolA family.</text>
</comment>
<evidence type="ECO:0000255" key="1">
    <source>
        <dbReference type="HAMAP-Rule" id="MF_00240"/>
    </source>
</evidence>
<gene>
    <name evidence="1" type="primary">lolA</name>
    <name type="ordered locus">HSM_1283</name>
</gene>
<accession>B0UU06</accession>
<organism>
    <name type="scientific">Histophilus somni (strain 2336)</name>
    <name type="common">Haemophilus somnus</name>
    <dbReference type="NCBI Taxonomy" id="228400"/>
    <lineage>
        <taxon>Bacteria</taxon>
        <taxon>Pseudomonadati</taxon>
        <taxon>Pseudomonadota</taxon>
        <taxon>Gammaproteobacteria</taxon>
        <taxon>Pasteurellales</taxon>
        <taxon>Pasteurellaceae</taxon>
        <taxon>Histophilus</taxon>
    </lineage>
</organism>
<feature type="signal peptide" evidence="1">
    <location>
        <begin position="1"/>
        <end position="21"/>
    </location>
</feature>
<feature type="chain" id="PRO_5000311068" description="Outer-membrane lipoprotein carrier protein">
    <location>
        <begin position="22"/>
        <end position="204"/>
    </location>
</feature>
<name>LOLA_HISS2</name>